<evidence type="ECO:0000255" key="1">
    <source>
        <dbReference type="HAMAP-Rule" id="MF_00423"/>
    </source>
</evidence>
<comment type="function">
    <text evidence="1">Converts seryl-tRNA(Sec) to selenocysteinyl-tRNA(Sec) required for selenoprotein biosynthesis.</text>
</comment>
<comment type="catalytic activity">
    <reaction evidence="1">
        <text>L-seryl-tRNA(Sec) + selenophosphate + H(+) = L-selenocysteinyl-tRNA(Sec) + phosphate</text>
        <dbReference type="Rhea" id="RHEA:22728"/>
        <dbReference type="Rhea" id="RHEA-COMP:9742"/>
        <dbReference type="Rhea" id="RHEA-COMP:9743"/>
        <dbReference type="ChEBI" id="CHEBI:15378"/>
        <dbReference type="ChEBI" id="CHEBI:16144"/>
        <dbReference type="ChEBI" id="CHEBI:43474"/>
        <dbReference type="ChEBI" id="CHEBI:78533"/>
        <dbReference type="ChEBI" id="CHEBI:78573"/>
        <dbReference type="EC" id="2.9.1.1"/>
    </reaction>
</comment>
<comment type="cofactor">
    <cofactor evidence="1">
        <name>pyridoxal 5'-phosphate</name>
        <dbReference type="ChEBI" id="CHEBI:597326"/>
    </cofactor>
</comment>
<comment type="pathway">
    <text evidence="1">Aminoacyl-tRNA biosynthesis; selenocysteinyl-tRNA(Sec) biosynthesis; selenocysteinyl-tRNA(Sec) from L-seryl-tRNA(Sec) (bacterial route): step 1/1.</text>
</comment>
<comment type="subunit">
    <text evidence="1">Homodecamer; pentamer of dimers. Binds only one seryl-tRNA(Sec) per dimer.</text>
</comment>
<comment type="subcellular location">
    <subcellularLocation>
        <location evidence="1">Cytoplasm</location>
    </subcellularLocation>
</comment>
<comment type="similarity">
    <text evidence="1">Belongs to the SelA family.</text>
</comment>
<reference key="1">
    <citation type="journal article" date="2011" name="J. Bacteriol.">
        <title>Comparative genomics of 28 Salmonella enterica isolates: evidence for CRISPR-mediated adaptive sublineage evolution.</title>
        <authorList>
            <person name="Fricke W.F."/>
            <person name="Mammel M.K."/>
            <person name="McDermott P.F."/>
            <person name="Tartera C."/>
            <person name="White D.G."/>
            <person name="Leclerc J.E."/>
            <person name="Ravel J."/>
            <person name="Cebula T.A."/>
        </authorList>
    </citation>
    <scope>NUCLEOTIDE SEQUENCE [LARGE SCALE GENOMIC DNA]</scope>
    <source>
        <strain>SL476</strain>
    </source>
</reference>
<dbReference type="EC" id="2.9.1.1" evidence="1"/>
<dbReference type="EMBL" id="CP001120">
    <property type="protein sequence ID" value="ACF68439.1"/>
    <property type="molecule type" value="Genomic_DNA"/>
</dbReference>
<dbReference type="RefSeq" id="WP_000200187.1">
    <property type="nucleotide sequence ID" value="NC_011083.1"/>
</dbReference>
<dbReference type="SMR" id="B4T974"/>
<dbReference type="KEGG" id="seh:SeHA_C4006"/>
<dbReference type="HOGENOM" id="CLU_038142_1_0_6"/>
<dbReference type="UniPathway" id="UPA00906">
    <property type="reaction ID" value="UER00896"/>
</dbReference>
<dbReference type="Proteomes" id="UP000001866">
    <property type="component" value="Chromosome"/>
</dbReference>
<dbReference type="GO" id="GO:0005737">
    <property type="term" value="C:cytoplasm"/>
    <property type="evidence" value="ECO:0007669"/>
    <property type="project" value="UniProtKB-SubCell"/>
</dbReference>
<dbReference type="GO" id="GO:0004125">
    <property type="term" value="F:L-seryl-tRNA(Sec) selenium transferase activity"/>
    <property type="evidence" value="ECO:0007669"/>
    <property type="project" value="UniProtKB-UniRule"/>
</dbReference>
<dbReference type="GO" id="GO:0001717">
    <property type="term" value="P:conversion of seryl-tRNAsec to selenocys-tRNAsec"/>
    <property type="evidence" value="ECO:0007669"/>
    <property type="project" value="UniProtKB-UniRule"/>
</dbReference>
<dbReference type="GO" id="GO:0001514">
    <property type="term" value="P:selenocysteine incorporation"/>
    <property type="evidence" value="ECO:0007669"/>
    <property type="project" value="UniProtKB-UniRule"/>
</dbReference>
<dbReference type="FunFam" id="3.40.640.10:FF:000028">
    <property type="entry name" value="L-seryl-tRNA(Sec) selenium transferase"/>
    <property type="match status" value="1"/>
</dbReference>
<dbReference type="FunFam" id="3.90.1150.180:FF:000001">
    <property type="entry name" value="L-seryl-tRNA(Sec) selenium transferase"/>
    <property type="match status" value="1"/>
</dbReference>
<dbReference type="Gene3D" id="3.90.1150.180">
    <property type="match status" value="1"/>
</dbReference>
<dbReference type="Gene3D" id="3.40.640.10">
    <property type="entry name" value="Type I PLP-dependent aspartate aminotransferase-like (Major domain)"/>
    <property type="match status" value="1"/>
</dbReference>
<dbReference type="HAMAP" id="MF_00423">
    <property type="entry name" value="SelA"/>
    <property type="match status" value="1"/>
</dbReference>
<dbReference type="InterPro" id="IPR015424">
    <property type="entry name" value="PyrdxlP-dep_Trfase"/>
</dbReference>
<dbReference type="InterPro" id="IPR015421">
    <property type="entry name" value="PyrdxlP-dep_Trfase_major"/>
</dbReference>
<dbReference type="InterPro" id="IPR018319">
    <property type="entry name" value="SelA-like"/>
</dbReference>
<dbReference type="InterPro" id="IPR004534">
    <property type="entry name" value="SelA_trans"/>
</dbReference>
<dbReference type="InterPro" id="IPR025862">
    <property type="entry name" value="SelA_trans_N_dom"/>
</dbReference>
<dbReference type="NCBIfam" id="TIGR00474">
    <property type="entry name" value="selA"/>
    <property type="match status" value="1"/>
</dbReference>
<dbReference type="PANTHER" id="PTHR32328">
    <property type="entry name" value="L-SERYL-TRNA(SEC) SELENIUM TRANSFERASE"/>
    <property type="match status" value="1"/>
</dbReference>
<dbReference type="PANTHER" id="PTHR32328:SF0">
    <property type="entry name" value="L-SERYL-TRNA(SEC) SELENIUM TRANSFERASE"/>
    <property type="match status" value="1"/>
</dbReference>
<dbReference type="Pfam" id="PF12390">
    <property type="entry name" value="Se-cys_synth_N"/>
    <property type="match status" value="1"/>
</dbReference>
<dbReference type="Pfam" id="PF03841">
    <property type="entry name" value="SelA"/>
    <property type="match status" value="1"/>
</dbReference>
<dbReference type="SUPFAM" id="SSF53383">
    <property type="entry name" value="PLP-dependent transferases"/>
    <property type="match status" value="1"/>
</dbReference>
<proteinExistence type="inferred from homology"/>
<organism>
    <name type="scientific">Salmonella heidelberg (strain SL476)</name>
    <dbReference type="NCBI Taxonomy" id="454169"/>
    <lineage>
        <taxon>Bacteria</taxon>
        <taxon>Pseudomonadati</taxon>
        <taxon>Pseudomonadota</taxon>
        <taxon>Gammaproteobacteria</taxon>
        <taxon>Enterobacterales</taxon>
        <taxon>Enterobacteriaceae</taxon>
        <taxon>Salmonella</taxon>
    </lineage>
</organism>
<feature type="chain" id="PRO_1000124154" description="L-seryl-tRNA(Sec) selenium transferase">
    <location>
        <begin position="1"/>
        <end position="463"/>
    </location>
</feature>
<feature type="modified residue" description="N6-(pyridoxal phosphate)lysine" evidence="1">
    <location>
        <position position="295"/>
    </location>
</feature>
<keyword id="KW-0963">Cytoplasm</keyword>
<keyword id="KW-0648">Protein biosynthesis</keyword>
<keyword id="KW-0663">Pyridoxal phosphate</keyword>
<keyword id="KW-0711">Selenium</keyword>
<keyword id="KW-0808">Transferase</keyword>
<accession>B4T974</accession>
<gene>
    <name evidence="1" type="primary">selA</name>
    <name type="ordered locus">SeHA_C4006</name>
</gene>
<sequence length="463" mass="50859">MTSETRTLYSQLPAIDRLLHDSAFLSLRDRYGHTQVVDLLRRMLDDARDVIRNTQTLPDWYADWAQEAKLRLENAAQSALRPVINLTGTVLHTNLGRALQAQEAIEAVTQAMRAPVTLEYDLDGAGRGHRDRALATLLCRITGAEDACIVNNNAAAVLLMLAATASGKEVVVSRGELVEIGGAFRIPDVMRQAGCTLHEVGTTNRTHAKDYRQAVNENTGLLMKVHTSNYSIEGFTKTVEEAELAEIGRELDIPVVADLGSGSLVDLSQYGLPKEPMPQQLIAAGVSLVSFSGDKLLGGPQAGIIVGKKAMIAQLQSHPLKRALRADKMTLAALEATLRLYLHPEALAEKLPTLRLLTRSEASIREQAQRLQARLAARYGDEFALEVKPCLSQIGSGSLPVDRLPSAAMTFTPHDGRGSRLEALAARWRMLPVPVIGRIYDGRLWLDMRCLEDESRFMEMMLK</sequence>
<protein>
    <recommendedName>
        <fullName evidence="1">L-seryl-tRNA(Sec) selenium transferase</fullName>
        <ecNumber evidence="1">2.9.1.1</ecNumber>
    </recommendedName>
    <alternativeName>
        <fullName evidence="1">Selenocysteine synthase</fullName>
        <shortName evidence="1">Sec synthase</shortName>
    </alternativeName>
    <alternativeName>
        <fullName evidence="1">Selenocysteinyl-tRNA(Sec) synthase</fullName>
    </alternativeName>
</protein>
<name>SELA_SALHS</name>